<accession>P0A2L9</accession>
<accession>Q9XCQ1</accession>
<protein>
    <recommendedName>
        <fullName>Protein SirB1</fullName>
    </recommendedName>
</protein>
<reference key="1">
    <citation type="journal article" date="1999" name="J. Bacteriol.">
        <title>A HilA-independent pathway to Salmonella typhimurium invasion gene transcription.</title>
        <authorList>
            <person name="Rakeman J.L."/>
            <person name="Bonifield H.R."/>
            <person name="Miller S.I."/>
        </authorList>
    </citation>
    <scope>NUCLEOTIDE SEQUENCE [GENOMIC DNA]</scope>
    <scope>PUTATIVE FUNCTION</scope>
    <scope>DISRUPTION PHENOTYPE</scope>
    <source>
        <strain>ATCC 14028 / SGSG 2980 / CDC 6516-60 / NCTC 12023</strain>
    </source>
</reference>
<reference key="2">
    <citation type="journal article" date="2001" name="Nature">
        <title>Complete genome sequence of Salmonella enterica serovar Typhimurium LT2.</title>
        <authorList>
            <person name="McClelland M."/>
            <person name="Sanderson K.E."/>
            <person name="Spieth J."/>
            <person name="Clifton S.W."/>
            <person name="Latreille P."/>
            <person name="Courtney L."/>
            <person name="Porwollik S."/>
            <person name="Ali J."/>
            <person name="Dante M."/>
            <person name="Du F."/>
            <person name="Hou S."/>
            <person name="Layman D."/>
            <person name="Leonard S."/>
            <person name="Nguyen C."/>
            <person name="Scott K."/>
            <person name="Holmes A."/>
            <person name="Grewal N."/>
            <person name="Mulvaney E."/>
            <person name="Ryan E."/>
            <person name="Sun H."/>
            <person name="Florea L."/>
            <person name="Miller W."/>
            <person name="Stoneking T."/>
            <person name="Nhan M."/>
            <person name="Waterston R."/>
            <person name="Wilson R.K."/>
        </authorList>
    </citation>
    <scope>NUCLEOTIDE SEQUENCE [LARGE SCALE GENOMIC DNA]</scope>
    <source>
        <strain>LT2 / SGSC1412 / ATCC 700720</strain>
    </source>
</reference>
<comment type="function">
    <text evidence="1">Required for maximal expression of sirC, not required to invade host cells.</text>
</comment>
<comment type="disruption phenotype">
    <text evidence="1">Not essential for the ability to invade cultured HeLa cells (the invasive phenotype).</text>
</comment>
<comment type="similarity">
    <text evidence="3">Belongs to the UPF0162 family.</text>
</comment>
<evidence type="ECO:0000269" key="1">
    <source>
    </source>
</evidence>
<evidence type="ECO:0000303" key="2">
    <source>
    </source>
</evidence>
<evidence type="ECO:0000305" key="3"/>
<feature type="chain" id="PRO_0000202380" description="Protein SirB1">
    <location>
        <begin position="1"/>
        <end position="269"/>
    </location>
</feature>
<feature type="sequence conflict" description="In Ref. 1; AAD32200." evidence="3" ref="1">
    <original>A</original>
    <variation>T</variation>
    <location>
        <position position="174"/>
    </location>
</feature>
<keyword id="KW-1185">Reference proteome</keyword>
<proteinExistence type="inferred from homology"/>
<name>SIRB1_SALTY</name>
<sequence>MRSLADFEFNNAPLCDGMILASEMIRLDFPTQFVYDELERLVSLAQEEISQLLSQDEQLEKLLALFYGEWGFTDSRGVYRLSDALWLDKVLKKRQGSAVSLGAILLWIANRLDLPLVPVIFPTQLILRIESLEGEMWLINPFNGETLDEHTLEVWLKGNISPVAELFNEDLDEADNAEVIRKLLDTLKSSLMEERQMELALRVSEALLQFNPEDPYEIRDRGLIYAQLECEHVALTDLSYFVEQCPEDPISEMIRAQINTIAHKQIVLH</sequence>
<organism>
    <name type="scientific">Salmonella typhimurium (strain LT2 / SGSC1412 / ATCC 700720)</name>
    <dbReference type="NCBI Taxonomy" id="99287"/>
    <lineage>
        <taxon>Bacteria</taxon>
        <taxon>Pseudomonadati</taxon>
        <taxon>Pseudomonadota</taxon>
        <taxon>Gammaproteobacteria</taxon>
        <taxon>Enterobacterales</taxon>
        <taxon>Enterobacteriaceae</taxon>
        <taxon>Salmonella</taxon>
    </lineage>
</organism>
<gene>
    <name type="primary">sirB1</name>
    <name evidence="2" type="synonym">orf1</name>
    <name type="ordered locus">STM1773</name>
</gene>
<dbReference type="EMBL" id="AF134855">
    <property type="protein sequence ID" value="AAD32200.1"/>
    <property type="molecule type" value="Genomic_DNA"/>
</dbReference>
<dbReference type="EMBL" id="AE006468">
    <property type="protein sequence ID" value="AAL20688.1"/>
    <property type="molecule type" value="Genomic_DNA"/>
</dbReference>
<dbReference type="RefSeq" id="WP_001257065.1">
    <property type="nucleotide sequence ID" value="NC_003197.2"/>
</dbReference>
<dbReference type="SMR" id="P0A2L9"/>
<dbReference type="STRING" id="99287.STM1773"/>
<dbReference type="PaxDb" id="99287-STM1773"/>
<dbReference type="KEGG" id="stm:STM1773"/>
<dbReference type="PATRIC" id="fig|99287.12.peg.1868"/>
<dbReference type="HOGENOM" id="CLU_063810_0_0_6"/>
<dbReference type="OMA" id="WIAAEHD"/>
<dbReference type="PhylomeDB" id="P0A2L9"/>
<dbReference type="BioCyc" id="SENT99287:STM1773-MONOMER"/>
<dbReference type="Proteomes" id="UP000001014">
    <property type="component" value="Chromosome"/>
</dbReference>
<dbReference type="InterPro" id="IPR032698">
    <property type="entry name" value="SirB1_N"/>
</dbReference>
<dbReference type="NCBIfam" id="NF008188">
    <property type="entry name" value="PRK10941.1"/>
    <property type="match status" value="1"/>
</dbReference>
<dbReference type="PANTHER" id="PTHR31350:SF21">
    <property type="entry name" value="F-BOX ONLY PROTEIN 21"/>
    <property type="match status" value="1"/>
</dbReference>
<dbReference type="PANTHER" id="PTHR31350">
    <property type="entry name" value="SI:DKEY-261L7.2"/>
    <property type="match status" value="1"/>
</dbReference>
<dbReference type="Pfam" id="PF13371">
    <property type="entry name" value="TPR_9"/>
    <property type="match status" value="1"/>
</dbReference>
<dbReference type="Pfam" id="PF13369">
    <property type="entry name" value="Transglut_core2"/>
    <property type="match status" value="1"/>
</dbReference>